<evidence type="ECO:0000250" key="1">
    <source>
        <dbReference type="UniProtKB" id="Q8VHT6"/>
    </source>
</evidence>
<evidence type="ECO:0000250" key="2">
    <source>
        <dbReference type="UniProtKB" id="Q9HBK9"/>
    </source>
</evidence>
<evidence type="ECO:0000256" key="3">
    <source>
        <dbReference type="SAM" id="MobiDB-lite"/>
    </source>
</evidence>
<evidence type="ECO:0000305" key="4"/>
<reference key="1">
    <citation type="submission" date="1999-07" db="EMBL/GenBank/DDBJ databases">
        <title>Identification of novel hematopoietic stem cell regulatory genes.</title>
        <authorList>
            <person name="Phillips R.L."/>
            <person name="Ernst R.E."/>
            <person name="Dosil M."/>
            <person name="Wesley C.K."/>
            <person name="Moore K.A."/>
            <person name="Kingsley P.D."/>
            <person name="Sykes S."/>
            <person name="Palis J."/>
            <person name="Lemischka I.R."/>
        </authorList>
    </citation>
    <scope>NUCLEOTIDE SEQUENCE [MRNA]</scope>
    <source>
        <strain>C57BL/6J</strain>
        <tissue>Liver</tissue>
    </source>
</reference>
<reference key="2">
    <citation type="journal article" date="2009" name="PLoS Biol.">
        <title>Lineage-specific biology revealed by a finished genome assembly of the mouse.</title>
        <authorList>
            <person name="Church D.M."/>
            <person name="Goodstadt L."/>
            <person name="Hillier L.W."/>
            <person name="Zody M.C."/>
            <person name="Goldstein S."/>
            <person name="She X."/>
            <person name="Bult C.J."/>
            <person name="Agarwala R."/>
            <person name="Cherry J.L."/>
            <person name="DiCuccio M."/>
            <person name="Hlavina W."/>
            <person name="Kapustin Y."/>
            <person name="Meric P."/>
            <person name="Maglott D."/>
            <person name="Birtle Z."/>
            <person name="Marques A.C."/>
            <person name="Graves T."/>
            <person name="Zhou S."/>
            <person name="Teague B."/>
            <person name="Potamousis K."/>
            <person name="Churas C."/>
            <person name="Place M."/>
            <person name="Herschleb J."/>
            <person name="Runnheim R."/>
            <person name="Forrest D."/>
            <person name="Amos-Landgraf J."/>
            <person name="Schwartz D.C."/>
            <person name="Cheng Z."/>
            <person name="Lindblad-Toh K."/>
            <person name="Eichler E.E."/>
            <person name="Ponting C.P."/>
        </authorList>
    </citation>
    <scope>NUCLEOTIDE SEQUENCE [LARGE SCALE GENOMIC DNA]</scope>
    <source>
        <strain>C57BL/6J</strain>
    </source>
</reference>
<reference key="3">
    <citation type="journal article" date="2004" name="Genome Res.">
        <title>The status, quality, and expansion of the NIH full-length cDNA project: the Mammalian Gene Collection (MGC).</title>
        <authorList>
            <consortium name="The MGC Project Team"/>
        </authorList>
    </citation>
    <scope>NUCLEOTIDE SEQUENCE [LARGE SCALE MRNA]</scope>
    <source>
        <strain>FVB/N</strain>
        <tissue>Brain</tissue>
        <tissue>Colon</tissue>
    </source>
</reference>
<reference key="4">
    <citation type="journal article" date="2010" name="Cell">
        <title>A tissue-specific atlas of mouse protein phosphorylation and expression.</title>
        <authorList>
            <person name="Huttlin E.L."/>
            <person name="Jedrychowski M.P."/>
            <person name="Elias J.E."/>
            <person name="Goswami T."/>
            <person name="Rad R."/>
            <person name="Beausoleil S.A."/>
            <person name="Villen J."/>
            <person name="Haas W."/>
            <person name="Sowa M.E."/>
            <person name="Gygi S.P."/>
        </authorList>
    </citation>
    <scope>IDENTIFICATION BY MASS SPECTROMETRY [LARGE SCALE ANALYSIS]</scope>
    <source>
        <tissue>Brain</tissue>
        <tissue>Brown adipose tissue</tissue>
        <tissue>Heart</tissue>
        <tissue>Kidney</tissue>
        <tissue>Liver</tissue>
        <tissue>Lung</tissue>
        <tissue>Spleen</tissue>
        <tissue>Testis</tissue>
    </source>
</reference>
<comment type="function">
    <text evidence="1">Catalyzes the transfer of a methyl group from AdoMet to trivalent arsenicals producing methylated and dimethylated arsenicals. It methylates arsenite to form methylarsonate, Me-AsO(3)H(2), which is reduced by methylarsonate reductase to methylarsonite, Me-As(OH)2. Methylarsonite is also a substrate and it is converted into the much less toxic compound dimethylarsinate (cacodylate), Me(2)As(O)-OH.</text>
</comment>
<comment type="catalytic activity">
    <reaction evidence="1">
        <text>arsenic triglutathione + [thioredoxin]-dithiol + S-adenosyl-L-methionine + 2 H2O = methylarsonous acid + [thioredoxin]-disulfide + 3 glutathione + S-adenosyl-L-homocysteine + H(+)</text>
        <dbReference type="Rhea" id="RHEA:69460"/>
        <dbReference type="Rhea" id="RHEA-COMP:10698"/>
        <dbReference type="Rhea" id="RHEA-COMP:10700"/>
        <dbReference type="ChEBI" id="CHEBI:15377"/>
        <dbReference type="ChEBI" id="CHEBI:15378"/>
        <dbReference type="ChEBI" id="CHEBI:17826"/>
        <dbReference type="ChEBI" id="CHEBI:29950"/>
        <dbReference type="ChEBI" id="CHEBI:50058"/>
        <dbReference type="ChEBI" id="CHEBI:57856"/>
        <dbReference type="ChEBI" id="CHEBI:57925"/>
        <dbReference type="ChEBI" id="CHEBI:59789"/>
        <dbReference type="ChEBI" id="CHEBI:183640"/>
        <dbReference type="EC" id="2.1.1.137"/>
    </reaction>
</comment>
<comment type="catalytic activity">
    <reaction evidence="1">
        <text>arsenic triglutathione + 2 [thioredoxin]-dithiol + 2 S-adenosyl-L-methionine + H2O = dimethylarsinous acid + 2 [thioredoxin]-disulfide + 3 glutathione + 2 S-adenosyl-L-homocysteine + 2 H(+)</text>
        <dbReference type="Rhea" id="RHEA:69464"/>
        <dbReference type="Rhea" id="RHEA-COMP:10698"/>
        <dbReference type="Rhea" id="RHEA-COMP:10700"/>
        <dbReference type="ChEBI" id="CHEBI:15377"/>
        <dbReference type="ChEBI" id="CHEBI:15378"/>
        <dbReference type="ChEBI" id="CHEBI:23808"/>
        <dbReference type="ChEBI" id="CHEBI:29950"/>
        <dbReference type="ChEBI" id="CHEBI:50058"/>
        <dbReference type="ChEBI" id="CHEBI:57856"/>
        <dbReference type="ChEBI" id="CHEBI:57925"/>
        <dbReference type="ChEBI" id="CHEBI:59789"/>
        <dbReference type="ChEBI" id="CHEBI:183640"/>
        <dbReference type="EC" id="2.1.1.137"/>
    </reaction>
</comment>
<comment type="catalytic activity">
    <reaction evidence="1">
        <text>arsenic triglutathione + 3 [thioredoxin]-dithiol + 3 S-adenosyl-L-methionine = trimethylarsine + 3 [thioredoxin]-disulfide + 3 glutathione + 3 S-adenosyl-L-homocysteine + 3 H(+)</text>
        <dbReference type="Rhea" id="RHEA:69432"/>
        <dbReference type="Rhea" id="RHEA-COMP:10698"/>
        <dbReference type="Rhea" id="RHEA-COMP:10700"/>
        <dbReference type="ChEBI" id="CHEBI:15378"/>
        <dbReference type="ChEBI" id="CHEBI:27130"/>
        <dbReference type="ChEBI" id="CHEBI:29950"/>
        <dbReference type="ChEBI" id="CHEBI:50058"/>
        <dbReference type="ChEBI" id="CHEBI:57856"/>
        <dbReference type="ChEBI" id="CHEBI:57925"/>
        <dbReference type="ChEBI" id="CHEBI:59789"/>
        <dbReference type="ChEBI" id="CHEBI:183640"/>
        <dbReference type="EC" id="2.1.1.137"/>
    </reaction>
</comment>
<comment type="subcellular location">
    <subcellularLocation>
        <location evidence="1">Cytoplasm</location>
        <location evidence="1">Cytosol</location>
    </subcellularLocation>
</comment>
<comment type="similarity">
    <text evidence="4">Belongs to the methyltransferase superfamily. Arsenite methyltransferase family.</text>
</comment>
<sequence>MAASRDADEIHKDVQNYYGNVLKTSADLQTNACVTRAKPVPSYIRESLQNVHEDVSSRYYGCGLTVPERLENCRILDLGSGSGRDCYVLSQLVGEKGHVTGIDMTEVQVEVAKTYLEHHMEKFGFQAPNVTFLHGRIEKLAEAGIQSESYDIVISNCVINLVPDKQQVLQEVYRVLKHGGELYFSDVYASLEVPEDIKSHKVLWGECLGGALYWKDLAIIAQKIGFCPPRLVTADIITVENKELEGVLGDCRFVSATFRLFKLPKTEPAERCRVVYNGGIKGHEKELIFDANFTFKEGEAVAVDEETAAVLKNSRFAPDFLFTPVDASLPAPQGRSELETKVLIRDPFKLAEDSDKMKPRHAPEGTGGCCGKRKNC</sequence>
<name>AS3MT_MOUSE</name>
<gene>
    <name type="primary">As3mt</name>
    <name type="synonym">Cyt19</name>
</gene>
<feature type="chain" id="PRO_0000204448" description="Arsenite methyltransferase">
    <location>
        <begin position="1"/>
        <end position="376"/>
    </location>
</feature>
<feature type="region of interest" description="Disordered" evidence="3">
    <location>
        <begin position="354"/>
        <end position="376"/>
    </location>
</feature>
<feature type="compositionally biased region" description="Basic and acidic residues" evidence="3">
    <location>
        <begin position="354"/>
        <end position="363"/>
    </location>
</feature>
<feature type="modified residue" description="Phosphoserine" evidence="1">
    <location>
        <position position="47"/>
    </location>
</feature>
<feature type="modified residue" description="Phosphoserine" evidence="2">
    <location>
        <position position="336"/>
    </location>
</feature>
<feature type="sequence conflict" description="In Ref. 3; AAI45664." evidence="4" ref="3">
    <original>E</original>
    <variation>K</variation>
    <location>
        <position position="106"/>
    </location>
</feature>
<feature type="sequence conflict" description="In Ref. 1; AAF00618." evidence="4" ref="1">
    <original>D</original>
    <variation>G</variation>
    <location>
        <position position="151"/>
    </location>
</feature>
<feature type="sequence conflict" description="In Ref. 1; AAF00618." evidence="4" ref="1">
    <location>
        <begin position="335"/>
        <end position="346"/>
    </location>
</feature>
<accession>Q91WU5</accession>
<accession>A6H5W4</accession>
<accession>E9QLU6</accession>
<accession>Q9QZT1</accession>
<keyword id="KW-0963">Cytoplasm</keyword>
<keyword id="KW-0489">Methyltransferase</keyword>
<keyword id="KW-0597">Phosphoprotein</keyword>
<keyword id="KW-1185">Reference proteome</keyword>
<keyword id="KW-0949">S-adenosyl-L-methionine</keyword>
<keyword id="KW-0808">Transferase</keyword>
<dbReference type="EC" id="2.1.1.137" evidence="1"/>
<dbReference type="EMBL" id="AF166383">
    <property type="protein sequence ID" value="AAF00618.1"/>
    <property type="molecule type" value="mRNA"/>
</dbReference>
<dbReference type="EMBL" id="AC161865">
    <property type="status" value="NOT_ANNOTATED_CDS"/>
    <property type="molecule type" value="Genomic_DNA"/>
</dbReference>
<dbReference type="EMBL" id="BC145663">
    <property type="protein sequence ID" value="AAI45664.1"/>
    <property type="molecule type" value="mRNA"/>
</dbReference>
<dbReference type="EMBL" id="BC013468">
    <property type="status" value="NOT_ANNOTATED_CDS"/>
    <property type="molecule type" value="mRNA"/>
</dbReference>
<dbReference type="CCDS" id="CCDS50458.1"/>
<dbReference type="PIR" id="T44795">
    <property type="entry name" value="T44795"/>
</dbReference>
<dbReference type="RefSeq" id="NP_065602.2">
    <property type="nucleotide sequence ID" value="NM_020577.3"/>
</dbReference>
<dbReference type="SMR" id="Q91WU5"/>
<dbReference type="BioGRID" id="208264">
    <property type="interactions" value="2"/>
</dbReference>
<dbReference type="FunCoup" id="Q91WU5">
    <property type="interactions" value="246"/>
</dbReference>
<dbReference type="STRING" id="10090.ENSMUSP00000003655"/>
<dbReference type="GlyGen" id="Q91WU5">
    <property type="glycosylation" value="1 site, 1 O-linked glycan (1 site)"/>
</dbReference>
<dbReference type="iPTMnet" id="Q91WU5"/>
<dbReference type="PhosphoSitePlus" id="Q91WU5"/>
<dbReference type="SwissPalm" id="Q91WU5"/>
<dbReference type="jPOST" id="Q91WU5"/>
<dbReference type="PaxDb" id="10090-ENSMUSP00000003655"/>
<dbReference type="PeptideAtlas" id="Q91WU5"/>
<dbReference type="ProteomicsDB" id="281808"/>
<dbReference type="Antibodypedia" id="2804">
    <property type="antibodies" value="137 antibodies from 31 providers"/>
</dbReference>
<dbReference type="DNASU" id="57344"/>
<dbReference type="Ensembl" id="ENSMUST00000003655.9">
    <property type="protein sequence ID" value="ENSMUSP00000003655.8"/>
    <property type="gene ID" value="ENSMUSG00000003559.9"/>
</dbReference>
<dbReference type="GeneID" id="57344"/>
<dbReference type="KEGG" id="mmu:57344"/>
<dbReference type="UCSC" id="uc008huc.1">
    <property type="organism name" value="mouse"/>
</dbReference>
<dbReference type="AGR" id="MGI:1929882"/>
<dbReference type="CTD" id="57412"/>
<dbReference type="MGI" id="MGI:1929882">
    <property type="gene designation" value="As3mt"/>
</dbReference>
<dbReference type="VEuPathDB" id="HostDB:ENSMUSG00000003559"/>
<dbReference type="eggNOG" id="ENOG502QQD6">
    <property type="taxonomic scope" value="Eukaryota"/>
</dbReference>
<dbReference type="GeneTree" id="ENSGT00390000001742"/>
<dbReference type="HOGENOM" id="CLU_052868_0_1_1"/>
<dbReference type="InParanoid" id="Q91WU5"/>
<dbReference type="OMA" id="EPACEDY"/>
<dbReference type="OrthoDB" id="8300214at2759"/>
<dbReference type="PhylomeDB" id="Q91WU5"/>
<dbReference type="TreeFam" id="TF343797"/>
<dbReference type="BRENDA" id="2.1.1.137">
    <property type="organism ID" value="3474"/>
</dbReference>
<dbReference type="Reactome" id="R-MMU-156581">
    <property type="pathway name" value="Methylation"/>
</dbReference>
<dbReference type="BioGRID-ORCS" id="57344">
    <property type="hits" value="0 hits in 62 CRISPR screens"/>
</dbReference>
<dbReference type="ChiTaRS" id="As3mt">
    <property type="organism name" value="mouse"/>
</dbReference>
<dbReference type="PRO" id="PR:Q91WU5"/>
<dbReference type="Proteomes" id="UP000000589">
    <property type="component" value="Chromosome 19"/>
</dbReference>
<dbReference type="RNAct" id="Q91WU5">
    <property type="molecule type" value="protein"/>
</dbReference>
<dbReference type="Bgee" id="ENSMUSG00000003559">
    <property type="expression patterns" value="Expressed in yolk sac and 233 other cell types or tissues"/>
</dbReference>
<dbReference type="ExpressionAtlas" id="Q91WU5">
    <property type="expression patterns" value="baseline and differential"/>
</dbReference>
<dbReference type="GO" id="GO:0005829">
    <property type="term" value="C:cytosol"/>
    <property type="evidence" value="ECO:0000250"/>
    <property type="project" value="UniProtKB"/>
</dbReference>
<dbReference type="GO" id="GO:0005739">
    <property type="term" value="C:mitochondrion"/>
    <property type="evidence" value="ECO:0007005"/>
    <property type="project" value="MGI"/>
</dbReference>
<dbReference type="GO" id="GO:0030791">
    <property type="term" value="F:arsenite methyltransferase activity"/>
    <property type="evidence" value="ECO:0000250"/>
    <property type="project" value="UniProtKB"/>
</dbReference>
<dbReference type="GO" id="GO:0018872">
    <property type="term" value="P:arsonoacetate metabolic process"/>
    <property type="evidence" value="ECO:0000250"/>
    <property type="project" value="UniProtKB"/>
</dbReference>
<dbReference type="GO" id="GO:0032259">
    <property type="term" value="P:methylation"/>
    <property type="evidence" value="ECO:0007669"/>
    <property type="project" value="UniProtKB-KW"/>
</dbReference>
<dbReference type="GO" id="GO:0046685">
    <property type="term" value="P:response to arsenic-containing substance"/>
    <property type="evidence" value="ECO:0000266"/>
    <property type="project" value="MGI"/>
</dbReference>
<dbReference type="GO" id="GO:0009404">
    <property type="term" value="P:toxin metabolic process"/>
    <property type="evidence" value="ECO:0000250"/>
    <property type="project" value="UniProtKB"/>
</dbReference>
<dbReference type="CDD" id="cd02440">
    <property type="entry name" value="AdoMet_MTases"/>
    <property type="match status" value="1"/>
</dbReference>
<dbReference type="FunFam" id="3.40.5.100:FF:000001">
    <property type="entry name" value="Arsenite methyltransferase"/>
    <property type="match status" value="1"/>
</dbReference>
<dbReference type="Gene3D" id="3.40.5.100">
    <property type="match status" value="1"/>
</dbReference>
<dbReference type="Gene3D" id="3.40.50.150">
    <property type="entry name" value="Vaccinia Virus protein VP39"/>
    <property type="match status" value="1"/>
</dbReference>
<dbReference type="InterPro" id="IPR026669">
    <property type="entry name" value="Arsenite_MeTrfase-like"/>
</dbReference>
<dbReference type="InterPro" id="IPR025714">
    <property type="entry name" value="Methyltranfer_dom"/>
</dbReference>
<dbReference type="InterPro" id="IPR029063">
    <property type="entry name" value="SAM-dependent_MTases_sf"/>
</dbReference>
<dbReference type="PANTHER" id="PTHR43675">
    <property type="entry name" value="ARSENITE METHYLTRANSFERASE"/>
    <property type="match status" value="1"/>
</dbReference>
<dbReference type="PANTHER" id="PTHR43675:SF8">
    <property type="entry name" value="ARSENITE METHYLTRANSFERASE"/>
    <property type="match status" value="1"/>
</dbReference>
<dbReference type="Pfam" id="PF13847">
    <property type="entry name" value="Methyltransf_31"/>
    <property type="match status" value="1"/>
</dbReference>
<dbReference type="SUPFAM" id="SSF53335">
    <property type="entry name" value="S-adenosyl-L-methionine-dependent methyltransferases"/>
    <property type="match status" value="1"/>
</dbReference>
<organism>
    <name type="scientific">Mus musculus</name>
    <name type="common">Mouse</name>
    <dbReference type="NCBI Taxonomy" id="10090"/>
    <lineage>
        <taxon>Eukaryota</taxon>
        <taxon>Metazoa</taxon>
        <taxon>Chordata</taxon>
        <taxon>Craniata</taxon>
        <taxon>Vertebrata</taxon>
        <taxon>Euteleostomi</taxon>
        <taxon>Mammalia</taxon>
        <taxon>Eutheria</taxon>
        <taxon>Euarchontoglires</taxon>
        <taxon>Glires</taxon>
        <taxon>Rodentia</taxon>
        <taxon>Myomorpha</taxon>
        <taxon>Muroidea</taxon>
        <taxon>Muridae</taxon>
        <taxon>Murinae</taxon>
        <taxon>Mus</taxon>
        <taxon>Mus</taxon>
    </lineage>
</organism>
<protein>
    <recommendedName>
        <fullName>Arsenite methyltransferase</fullName>
        <ecNumber evidence="1">2.1.1.137</ecNumber>
    </recommendedName>
    <alternativeName>
        <fullName>Methylarsonite methyltransferase</fullName>
    </alternativeName>
    <alternativeName>
        <fullName>S-adenosyl-L-methionine:arsenic(III) methyltransferase</fullName>
    </alternativeName>
</protein>
<proteinExistence type="evidence at protein level"/>